<reference key="1">
    <citation type="journal article" date="1994" name="Auk">
        <title>Phylogeny of cranes (Gruiformes: Gruidae) based on cytochrome-b DNA sequences.</title>
        <authorList>
            <person name="Krajewski C.W."/>
            <person name="Fetzner J.W."/>
        </authorList>
    </citation>
    <scope>NUCLEOTIDE SEQUENCE [GENOMIC DNA]</scope>
</reference>
<gene>
    <name type="primary">MT-CYB</name>
    <name type="synonym">COB</name>
    <name type="synonym">CYTB</name>
    <name type="synonym">MTCYB</name>
</gene>
<evidence type="ECO:0000250" key="1"/>
<evidence type="ECO:0000250" key="2">
    <source>
        <dbReference type="UniProtKB" id="P00157"/>
    </source>
</evidence>
<evidence type="ECO:0000255" key="3">
    <source>
        <dbReference type="PROSITE-ProRule" id="PRU00967"/>
    </source>
</evidence>
<evidence type="ECO:0000255" key="4">
    <source>
        <dbReference type="PROSITE-ProRule" id="PRU00968"/>
    </source>
</evidence>
<sequence length="380" mass="42637">MAPNLRKSHPLLKMINNSLIDLPTPSNISAWWNFGSLLGICLTTQILTGLLLAAHYTADTTLAFSSVAHTCRNVQHGWLIRNLHANGASFFFICIYMHVGRGLYYGSYLYKETWNTGVILLLTLMATAFVGYVLPWGQMSFWGATVITNLFSAIPYIGQTIVEWAWGGFSVDNPTLTRFFTLHFLLPFMIMGLTLIHLTFLHESGSNNPLGIVSNCDKIPFHPYFSLKDILGFMLMFLPLMTLALFSPNLLGDPENFAPANPLVTPPHIKPEWYFLFAYAILRSIPNKLGGVLALAASMLVLFLAPLLHKSKQRTMTFRPLSQLLFWTLTANLLILTWVGSQPVEHPFMIIGQLASLTYFTILLILFPLTGALENKMLNY</sequence>
<feature type="chain" id="PRO_0000060665" description="Cytochrome b">
    <location>
        <begin position="1"/>
        <end position="380"/>
    </location>
</feature>
<feature type="transmembrane region" description="Helical" evidence="2">
    <location>
        <begin position="34"/>
        <end position="54"/>
    </location>
</feature>
<feature type="transmembrane region" description="Helical" evidence="2">
    <location>
        <begin position="78"/>
        <end position="99"/>
    </location>
</feature>
<feature type="transmembrane region" description="Helical" evidence="2">
    <location>
        <begin position="114"/>
        <end position="134"/>
    </location>
</feature>
<feature type="transmembrane region" description="Helical" evidence="2">
    <location>
        <begin position="179"/>
        <end position="199"/>
    </location>
</feature>
<feature type="transmembrane region" description="Helical" evidence="2">
    <location>
        <begin position="227"/>
        <end position="247"/>
    </location>
</feature>
<feature type="transmembrane region" description="Helical" evidence="2">
    <location>
        <begin position="289"/>
        <end position="309"/>
    </location>
</feature>
<feature type="transmembrane region" description="Helical" evidence="2">
    <location>
        <begin position="321"/>
        <end position="341"/>
    </location>
</feature>
<feature type="transmembrane region" description="Helical" evidence="2">
    <location>
        <begin position="348"/>
        <end position="368"/>
    </location>
</feature>
<feature type="binding site" description="axial binding residue" evidence="2">
    <location>
        <position position="84"/>
    </location>
    <ligand>
        <name>heme b</name>
        <dbReference type="ChEBI" id="CHEBI:60344"/>
        <label>b562</label>
    </ligand>
    <ligandPart>
        <name>Fe</name>
        <dbReference type="ChEBI" id="CHEBI:18248"/>
    </ligandPart>
</feature>
<feature type="binding site" description="axial binding residue" evidence="2">
    <location>
        <position position="98"/>
    </location>
    <ligand>
        <name>heme b</name>
        <dbReference type="ChEBI" id="CHEBI:60344"/>
        <label>b566</label>
    </ligand>
    <ligandPart>
        <name>Fe</name>
        <dbReference type="ChEBI" id="CHEBI:18248"/>
    </ligandPart>
</feature>
<feature type="binding site" description="axial binding residue" evidence="2">
    <location>
        <position position="183"/>
    </location>
    <ligand>
        <name>heme b</name>
        <dbReference type="ChEBI" id="CHEBI:60344"/>
        <label>b562</label>
    </ligand>
    <ligandPart>
        <name>Fe</name>
        <dbReference type="ChEBI" id="CHEBI:18248"/>
    </ligandPart>
</feature>
<feature type="binding site" description="axial binding residue" evidence="2">
    <location>
        <position position="197"/>
    </location>
    <ligand>
        <name>heme b</name>
        <dbReference type="ChEBI" id="CHEBI:60344"/>
        <label>b566</label>
    </ligand>
    <ligandPart>
        <name>Fe</name>
        <dbReference type="ChEBI" id="CHEBI:18248"/>
    </ligandPart>
</feature>
<feature type="binding site" evidence="2">
    <location>
        <position position="202"/>
    </location>
    <ligand>
        <name>a ubiquinone</name>
        <dbReference type="ChEBI" id="CHEBI:16389"/>
    </ligand>
</feature>
<proteinExistence type="inferred from homology"/>
<keyword id="KW-0249">Electron transport</keyword>
<keyword id="KW-0349">Heme</keyword>
<keyword id="KW-0408">Iron</keyword>
<keyword id="KW-0472">Membrane</keyword>
<keyword id="KW-0479">Metal-binding</keyword>
<keyword id="KW-0496">Mitochondrion</keyword>
<keyword id="KW-0999">Mitochondrion inner membrane</keyword>
<keyword id="KW-0679">Respiratory chain</keyword>
<keyword id="KW-0812">Transmembrane</keyword>
<keyword id="KW-1133">Transmembrane helix</keyword>
<keyword id="KW-0813">Transport</keyword>
<keyword id="KW-0830">Ubiquinone</keyword>
<protein>
    <recommendedName>
        <fullName>Cytochrome b</fullName>
    </recommendedName>
    <alternativeName>
        <fullName>Complex III subunit 3</fullName>
    </alternativeName>
    <alternativeName>
        <fullName>Complex III subunit III</fullName>
    </alternativeName>
    <alternativeName>
        <fullName>Cytochrome b-c1 complex subunit 3</fullName>
    </alternativeName>
    <alternativeName>
        <fullName>Ubiquinol-cytochrome-c reductase complex cytochrome b subunit</fullName>
    </alternativeName>
</protein>
<geneLocation type="mitochondrion"/>
<dbReference type="EMBL" id="U27544">
    <property type="protein sequence ID" value="AAA69783.1"/>
    <property type="molecule type" value="Genomic_DNA"/>
</dbReference>
<dbReference type="RefSeq" id="YP_007624304.1">
    <property type="nucleotide sequence ID" value="NC_020570.1"/>
</dbReference>
<dbReference type="SMR" id="Q33987"/>
<dbReference type="GeneID" id="14840846"/>
<dbReference type="CTD" id="4519"/>
<dbReference type="GO" id="GO:0005743">
    <property type="term" value="C:mitochondrial inner membrane"/>
    <property type="evidence" value="ECO:0007669"/>
    <property type="project" value="UniProtKB-SubCell"/>
</dbReference>
<dbReference type="GO" id="GO:0045275">
    <property type="term" value="C:respiratory chain complex III"/>
    <property type="evidence" value="ECO:0007669"/>
    <property type="project" value="InterPro"/>
</dbReference>
<dbReference type="GO" id="GO:0046872">
    <property type="term" value="F:metal ion binding"/>
    <property type="evidence" value="ECO:0007669"/>
    <property type="project" value="UniProtKB-KW"/>
</dbReference>
<dbReference type="GO" id="GO:0008121">
    <property type="term" value="F:ubiquinol-cytochrome-c reductase activity"/>
    <property type="evidence" value="ECO:0007669"/>
    <property type="project" value="InterPro"/>
</dbReference>
<dbReference type="GO" id="GO:0006122">
    <property type="term" value="P:mitochondrial electron transport, ubiquinol to cytochrome c"/>
    <property type="evidence" value="ECO:0007669"/>
    <property type="project" value="TreeGrafter"/>
</dbReference>
<dbReference type="CDD" id="cd00290">
    <property type="entry name" value="cytochrome_b_C"/>
    <property type="match status" value="1"/>
</dbReference>
<dbReference type="CDD" id="cd00284">
    <property type="entry name" value="Cytochrome_b_N"/>
    <property type="match status" value="1"/>
</dbReference>
<dbReference type="FunFam" id="1.20.810.10:FF:000002">
    <property type="entry name" value="Cytochrome b"/>
    <property type="match status" value="1"/>
</dbReference>
<dbReference type="Gene3D" id="1.20.810.10">
    <property type="entry name" value="Cytochrome Bc1 Complex, Chain C"/>
    <property type="match status" value="1"/>
</dbReference>
<dbReference type="InterPro" id="IPR005798">
    <property type="entry name" value="Cyt_b/b6_C"/>
</dbReference>
<dbReference type="InterPro" id="IPR036150">
    <property type="entry name" value="Cyt_b/b6_C_sf"/>
</dbReference>
<dbReference type="InterPro" id="IPR005797">
    <property type="entry name" value="Cyt_b/b6_N"/>
</dbReference>
<dbReference type="InterPro" id="IPR027387">
    <property type="entry name" value="Cytb/b6-like_sf"/>
</dbReference>
<dbReference type="InterPro" id="IPR030689">
    <property type="entry name" value="Cytochrome_b"/>
</dbReference>
<dbReference type="InterPro" id="IPR048260">
    <property type="entry name" value="Cytochrome_b_C_euk/bac"/>
</dbReference>
<dbReference type="InterPro" id="IPR048259">
    <property type="entry name" value="Cytochrome_b_N_euk/bac"/>
</dbReference>
<dbReference type="InterPro" id="IPR016174">
    <property type="entry name" value="Di-haem_cyt_TM"/>
</dbReference>
<dbReference type="PANTHER" id="PTHR19271">
    <property type="entry name" value="CYTOCHROME B"/>
    <property type="match status" value="1"/>
</dbReference>
<dbReference type="PANTHER" id="PTHR19271:SF16">
    <property type="entry name" value="CYTOCHROME B"/>
    <property type="match status" value="1"/>
</dbReference>
<dbReference type="Pfam" id="PF00032">
    <property type="entry name" value="Cytochrom_B_C"/>
    <property type="match status" value="1"/>
</dbReference>
<dbReference type="Pfam" id="PF00033">
    <property type="entry name" value="Cytochrome_B"/>
    <property type="match status" value="1"/>
</dbReference>
<dbReference type="PIRSF" id="PIRSF038885">
    <property type="entry name" value="COB"/>
    <property type="match status" value="1"/>
</dbReference>
<dbReference type="SUPFAM" id="SSF81648">
    <property type="entry name" value="a domain/subunit of cytochrome bc1 complex (Ubiquinol-cytochrome c reductase)"/>
    <property type="match status" value="1"/>
</dbReference>
<dbReference type="SUPFAM" id="SSF81342">
    <property type="entry name" value="Transmembrane di-heme cytochromes"/>
    <property type="match status" value="1"/>
</dbReference>
<dbReference type="PROSITE" id="PS51003">
    <property type="entry name" value="CYTB_CTER"/>
    <property type="match status" value="1"/>
</dbReference>
<dbReference type="PROSITE" id="PS51002">
    <property type="entry name" value="CYTB_NTER"/>
    <property type="match status" value="1"/>
</dbReference>
<comment type="function">
    <text evidence="2">Component of the ubiquinol-cytochrome c reductase complex (complex III or cytochrome b-c1 complex) that is part of the mitochondrial respiratory chain. The b-c1 complex mediates electron transfer from ubiquinol to cytochrome c. Contributes to the generation of a proton gradient across the mitochondrial membrane that is then used for ATP synthesis.</text>
</comment>
<comment type="cofactor">
    <cofactor evidence="2">
        <name>heme b</name>
        <dbReference type="ChEBI" id="CHEBI:60344"/>
    </cofactor>
    <text evidence="2">Binds 2 heme b groups non-covalently.</text>
</comment>
<comment type="subunit">
    <text evidence="2">The cytochrome bc1 complex contains 11 subunits: 3 respiratory subunits (MT-CYB, CYC1 and UQCRFS1), 2 core proteins (UQCRC1 and UQCRC2) and 6 low-molecular weight proteins (UQCRH/QCR6, UQCRB/QCR7, UQCRQ/QCR8, UQCR10/QCR9, UQCR11/QCR10 and a cleavage product of UQCRFS1). This cytochrome bc1 complex then forms a dimer.</text>
</comment>
<comment type="subcellular location">
    <subcellularLocation>
        <location evidence="2">Mitochondrion inner membrane</location>
        <topology evidence="2">Multi-pass membrane protein</topology>
    </subcellularLocation>
</comment>
<comment type="miscellaneous">
    <text evidence="1">Heme 1 (or BL or b562) is low-potential and absorbs at about 562 nm, and heme 2 (or BH or b566) is high-potential and absorbs at about 566 nm.</text>
</comment>
<comment type="similarity">
    <text evidence="3 4">Belongs to the cytochrome b family.</text>
</comment>
<comment type="caution">
    <text evidence="2">The full-length protein contains only eight transmembrane helices, not nine as predicted by bioinformatics tools.</text>
</comment>
<accession>Q33987</accession>
<organism>
    <name type="scientific">Balearica pavonina</name>
    <name type="common">Black crowned-crane</name>
    <dbReference type="NCBI Taxonomy" id="30414"/>
    <lineage>
        <taxon>Eukaryota</taxon>
        <taxon>Metazoa</taxon>
        <taxon>Chordata</taxon>
        <taxon>Craniata</taxon>
        <taxon>Vertebrata</taxon>
        <taxon>Euteleostomi</taxon>
        <taxon>Archelosauria</taxon>
        <taxon>Archosauria</taxon>
        <taxon>Dinosauria</taxon>
        <taxon>Saurischia</taxon>
        <taxon>Theropoda</taxon>
        <taxon>Coelurosauria</taxon>
        <taxon>Aves</taxon>
        <taxon>Neognathae</taxon>
        <taxon>Neoaves</taxon>
        <taxon>Gruiformes</taxon>
        <taxon>Gruidae</taxon>
        <taxon>Balearica</taxon>
    </lineage>
</organism>
<name>CYB_BALPA</name>